<comment type="function">
    <text evidence="1">Forms a proton-selective ion channel that is necessary for the efficient release of the viral genome during virus entry. After attaching to the cell surface, the virion enters the cell by endocytosis. Acidification of the endosome triggers M2 ion channel activity. The influx of protons into virion interior is believed to disrupt interactions between the viral ribonucleoprotein (RNP), matrix protein 1 (M1), and lipid bilayers, thereby freeing the viral genome from interaction with viral proteins and enabling RNA segments to migrate to the host cell nucleus, where influenza virus RNA transcription and replication occur. Also plays a role in viral proteins secretory pathway. Elevates the intravesicular pH of normally acidic compartments, such as trans-Golgi network, preventing newly formed hemagglutinin from premature switching to the fusion-active conformation.</text>
</comment>
<comment type="activity regulation">
    <text>The M2 protein from most influenza A strains is inhibited by amantadine and rimantadine, resulting in viral uncoating incapacity. Emergence of amantadine-resistant variants is usually rapid.</text>
</comment>
<comment type="subunit">
    <text evidence="1">Homotetramer; composed of two disulfide-linked dimers held together by non-covalent interactions. May interact with matrix protein 1.</text>
</comment>
<comment type="subcellular location">
    <subcellularLocation>
        <location evidence="1">Virion membrane</location>
    </subcellularLocation>
    <subcellularLocation>
        <location evidence="1">Host apical cell membrane</location>
        <topology evidence="1">Single-pass type III membrane protein</topology>
    </subcellularLocation>
    <text evidence="1">Abundantly expressed at the apical plasma membrane in infected polarized epithelial cells, in close proximity to budding and assembled virions. Minor component of virions (only 16-20 molecules/virion).</text>
</comment>
<comment type="alternative products">
    <event type="alternative splicing"/>
    <isoform>
        <id>Q77ZL5-1</id>
        <name>M2</name>
        <sequence type="displayed"/>
    </isoform>
    <isoform>
        <id>Q77ZL4-1</id>
        <name>M1</name>
        <sequence type="external"/>
    </isoform>
    <text>Only the first 9 residues are shared by the 2 isoforms.</text>
</comment>
<comment type="domain">
    <text evidence="1">Cytoplasmic tail plays an important role in virion assembly and morphogenesis.</text>
</comment>
<comment type="miscellaneous">
    <text evidence="1">When the channel is activated, one or more imidazole moieties of His-37 probably become bi-protonated.</text>
</comment>
<comment type="similarity">
    <text evidence="1">Belongs to the influenza viruses matrix protein M2 family.</text>
</comment>
<proteinExistence type="inferred from homology"/>
<dbReference type="EMBL" id="AF001675">
    <property type="protein sequence ID" value="AAC31275.1"/>
    <property type="molecule type" value="Genomic_RNA"/>
</dbReference>
<dbReference type="SMR" id="Q77ZL5"/>
<dbReference type="GO" id="GO:0020002">
    <property type="term" value="C:host cell plasma membrane"/>
    <property type="evidence" value="ECO:0007669"/>
    <property type="project" value="UniProtKB-SubCell"/>
</dbReference>
<dbReference type="GO" id="GO:0016020">
    <property type="term" value="C:membrane"/>
    <property type="evidence" value="ECO:0007669"/>
    <property type="project" value="UniProtKB-UniRule"/>
</dbReference>
<dbReference type="GO" id="GO:0055036">
    <property type="term" value="C:virion membrane"/>
    <property type="evidence" value="ECO:0007669"/>
    <property type="project" value="UniProtKB-SubCell"/>
</dbReference>
<dbReference type="GO" id="GO:0005216">
    <property type="term" value="F:monoatomic ion channel activity"/>
    <property type="evidence" value="ECO:0007669"/>
    <property type="project" value="UniProtKB-UniRule"/>
</dbReference>
<dbReference type="GO" id="GO:0015078">
    <property type="term" value="F:proton transmembrane transporter activity"/>
    <property type="evidence" value="ECO:0007669"/>
    <property type="project" value="UniProtKB-UniRule"/>
</dbReference>
<dbReference type="GO" id="GO:0051259">
    <property type="term" value="P:protein complex oligomerization"/>
    <property type="evidence" value="ECO:0007669"/>
    <property type="project" value="UniProtKB-UniRule"/>
</dbReference>
<dbReference type="GO" id="GO:0044694">
    <property type="term" value="P:symbiont genome entry into host cell via pore formation in plasma membrane"/>
    <property type="evidence" value="ECO:0007669"/>
    <property type="project" value="UniProtKB-UniRule"/>
</dbReference>
<dbReference type="GO" id="GO:0140321">
    <property type="term" value="P:symbiont-mediated suppression of host autophagy"/>
    <property type="evidence" value="ECO:0007669"/>
    <property type="project" value="UniProtKB-KW"/>
</dbReference>
<dbReference type="Gene3D" id="6.10.250.1640">
    <property type="match status" value="1"/>
</dbReference>
<dbReference type="HAMAP" id="MF_04069">
    <property type="entry name" value="INFV_M2"/>
    <property type="match status" value="1"/>
</dbReference>
<dbReference type="InterPro" id="IPR002089">
    <property type="entry name" value="Flu_M2"/>
</dbReference>
<dbReference type="Pfam" id="PF00599">
    <property type="entry name" value="Flu_M2"/>
    <property type="match status" value="1"/>
</dbReference>
<keyword id="KW-0025">Alternative splicing</keyword>
<keyword id="KW-1015">Disulfide bond</keyword>
<keyword id="KW-1032">Host cell membrane</keyword>
<keyword id="KW-1043">Host membrane</keyword>
<keyword id="KW-0945">Host-virus interaction</keyword>
<keyword id="KW-0375">Hydrogen ion transport</keyword>
<keyword id="KW-1083">Inhibition of host autophagy by virus</keyword>
<keyword id="KW-0407">Ion channel</keyword>
<keyword id="KW-0406">Ion transport</keyword>
<keyword id="KW-0449">Lipoprotein</keyword>
<keyword id="KW-0472">Membrane</keyword>
<keyword id="KW-0564">Palmitate</keyword>
<keyword id="KW-0597">Phosphoprotein</keyword>
<keyword id="KW-0735">Signal-anchor</keyword>
<keyword id="KW-0812">Transmembrane</keyword>
<keyword id="KW-1133">Transmembrane helix</keyword>
<keyword id="KW-0813">Transport</keyword>
<keyword id="KW-1182">Viral ion channel</keyword>
<keyword id="KW-0946">Virion</keyword>
<organismHost>
    <name type="scientific">Aves</name>
    <dbReference type="NCBI Taxonomy" id="8782"/>
</organismHost>
<organismHost>
    <name type="scientific">Equus caballus</name>
    <name type="common">Horse</name>
    <dbReference type="NCBI Taxonomy" id="9796"/>
</organismHost>
<evidence type="ECO:0000255" key="1">
    <source>
        <dbReference type="HAMAP-Rule" id="MF_04069"/>
    </source>
</evidence>
<evidence type="ECO:0000256" key="2">
    <source>
        <dbReference type="SAM" id="MobiDB-lite"/>
    </source>
</evidence>
<organism>
    <name type="scientific">Influenza A virus (strain A/Equine/New Market/1979 H3N8)</name>
    <dbReference type="NCBI Taxonomy" id="387226"/>
    <lineage>
        <taxon>Viruses</taxon>
        <taxon>Riboviria</taxon>
        <taxon>Orthornavirae</taxon>
        <taxon>Negarnaviricota</taxon>
        <taxon>Polyploviricotina</taxon>
        <taxon>Insthoviricetes</taxon>
        <taxon>Articulavirales</taxon>
        <taxon>Orthomyxoviridae</taxon>
        <taxon>Alphainfluenzavirus</taxon>
        <taxon>Alphainfluenzavirus influenzae</taxon>
        <taxon>Influenza A virus</taxon>
    </lineage>
</organism>
<protein>
    <recommendedName>
        <fullName evidence="1">Matrix protein 2</fullName>
    </recommendedName>
    <alternativeName>
        <fullName evidence="1">Proton channel protein M2</fullName>
    </alternativeName>
</protein>
<sequence>MSLLTEVETPTRNGWECKCSDSSDPLVIAASIIGILHLILWILDRLFFKFIYRRLKYGLKRGPSTEGVPESMREEYRQEQQNAVDVDDGHFVNIELE</sequence>
<accession>Q77ZL5</accession>
<reference key="1">
    <citation type="journal article" date="1998" name="Arch. Virol.">
        <title>Phylogenetic analyses of the matrix and non-structural genes of equine influenza viruses.</title>
        <authorList>
            <person name="Lindstrom S."/>
            <person name="Endo A."/>
            <person name="Sugita S."/>
            <person name="Pecoraro M."/>
            <person name="Hiromoto Y."/>
            <person name="Kamada M."/>
            <person name="Takahashi T."/>
            <person name="Nerome K."/>
        </authorList>
    </citation>
    <scope>NUCLEOTIDE SEQUENCE [GENOMIC RNA]</scope>
</reference>
<gene>
    <name evidence="1" type="primary">M</name>
</gene>
<feature type="chain" id="PRO_0000326366" description="Matrix protein 2">
    <location>
        <begin position="1"/>
        <end position="97"/>
    </location>
</feature>
<feature type="topological domain" description="Virion surface" evidence="1">
    <location>
        <begin position="1"/>
        <end position="22"/>
    </location>
</feature>
<feature type="transmembrane region" description="Helical; Signal-anchor for type III membrane protein" evidence="1">
    <location>
        <begin position="23"/>
        <end position="43"/>
    </location>
</feature>
<feature type="topological domain" description="Intravirion" evidence="1">
    <location>
        <begin position="44"/>
        <end position="97"/>
    </location>
</feature>
<feature type="region of interest" description="Disordered" evidence="2">
    <location>
        <begin position="61"/>
        <end position="80"/>
    </location>
</feature>
<feature type="site" description="Essential for channel activity, possibly by being protonated during channel activation, and by forming the channel gate and the selective filter" evidence="1">
    <location>
        <position position="37"/>
    </location>
</feature>
<feature type="site" description="Seems to be involved in pH gating" evidence="1">
    <location>
        <position position="41"/>
    </location>
</feature>
<feature type="modified residue" description="Phosphoserine; by host" evidence="1">
    <location>
        <position position="64"/>
    </location>
</feature>
<feature type="disulfide bond" description="Interchain (with C-17)" evidence="1">
    <location>
        <position position="17"/>
    </location>
</feature>
<feature type="disulfide bond" description="Interchain (with C-19)" evidence="1">
    <location>
        <position position="19"/>
    </location>
</feature>
<name>M2_I79A6</name>